<organism>
    <name type="scientific">Gallus gallus</name>
    <name type="common">Chicken</name>
    <dbReference type="NCBI Taxonomy" id="9031"/>
    <lineage>
        <taxon>Eukaryota</taxon>
        <taxon>Metazoa</taxon>
        <taxon>Chordata</taxon>
        <taxon>Craniata</taxon>
        <taxon>Vertebrata</taxon>
        <taxon>Euteleostomi</taxon>
        <taxon>Archelosauria</taxon>
        <taxon>Archosauria</taxon>
        <taxon>Dinosauria</taxon>
        <taxon>Saurischia</taxon>
        <taxon>Theropoda</taxon>
        <taxon>Coelurosauria</taxon>
        <taxon>Aves</taxon>
        <taxon>Neognathae</taxon>
        <taxon>Galloanserae</taxon>
        <taxon>Galliformes</taxon>
        <taxon>Phasianidae</taxon>
        <taxon>Phasianinae</taxon>
        <taxon>Gallus</taxon>
    </lineage>
</organism>
<gene>
    <name type="primary">PGR</name>
    <name type="synonym">NR3C3</name>
</gene>
<feature type="chain" id="PRO_0000053699" description="Progesterone receptor">
    <location>
        <begin position="1"/>
        <end position="786"/>
    </location>
</feature>
<feature type="domain" description="NR LBD" evidence="3">
    <location>
        <begin position="532"/>
        <end position="766"/>
    </location>
</feature>
<feature type="DNA-binding region" description="Nuclear receptor" evidence="2">
    <location>
        <begin position="421"/>
        <end position="486"/>
    </location>
</feature>
<feature type="zinc finger region" description="NR C4-type" evidence="2">
    <location>
        <begin position="421"/>
        <end position="441"/>
    </location>
</feature>
<feature type="zinc finger region" description="NR C4-type" evidence="2">
    <location>
        <begin position="457"/>
        <end position="481"/>
    </location>
</feature>
<feature type="region of interest" description="Modulating, Pro-Rich">
    <location>
        <begin position="1"/>
        <end position="420"/>
    </location>
</feature>
<feature type="region of interest" description="Disordered" evidence="4">
    <location>
        <begin position="1"/>
        <end position="95"/>
    </location>
</feature>
<feature type="region of interest" description="Disordered" evidence="4">
    <location>
        <begin position="110"/>
        <end position="212"/>
    </location>
</feature>
<feature type="region of interest" description="Disordered" evidence="4">
    <location>
        <begin position="252"/>
        <end position="279"/>
    </location>
</feature>
<feature type="compositionally biased region" description="Basic and acidic residues" evidence="4">
    <location>
        <begin position="1"/>
        <end position="10"/>
    </location>
</feature>
<feature type="compositionally biased region" description="Acidic residues" evidence="4">
    <location>
        <begin position="48"/>
        <end position="79"/>
    </location>
</feature>
<feature type="compositionally biased region" description="Pro residues" evidence="4">
    <location>
        <begin position="143"/>
        <end position="154"/>
    </location>
</feature>
<feature type="compositionally biased region" description="Basic and acidic residues" evidence="4">
    <location>
        <begin position="186"/>
        <end position="197"/>
    </location>
</feature>
<feature type="compositionally biased region" description="Low complexity" evidence="4">
    <location>
        <begin position="203"/>
        <end position="212"/>
    </location>
</feature>
<feature type="modified residue" description="Phosphoserine" evidence="5 8">
    <location>
        <position position="210"/>
    </location>
</feature>
<feature type="modified residue" description="Phosphoserine" evidence="5">
    <location>
        <position position="259"/>
    </location>
</feature>
<feature type="modified residue" description="Phosphoserine" evidence="5 7">
    <location>
        <position position="529"/>
    </location>
</feature>
<feature type="cross-link" description="Glycyl lysine isopeptide (Lys-Gly) (interchain with G-Cter in SUMO)" evidence="1">
    <location>
        <position position="7"/>
    </location>
</feature>
<feature type="cross-link" description="Glycyl lysine isopeptide (Lys-Gly) (interchain with G-Cter in SUMO); alternate" evidence="1">
    <location>
        <position position="294"/>
    </location>
</feature>
<feature type="cross-link" description="Glycyl lysine isopeptide (Lys-Gly) (interchain with G-Cter in ubiquitin); alternate" evidence="1">
    <location>
        <position position="294"/>
    </location>
</feature>
<feature type="cross-link" description="Glycyl lysine isopeptide (Lys-Gly) (interchain with G-Cter in SUMO)" evidence="1">
    <location>
        <position position="385"/>
    </location>
</feature>
<feature type="splice variant" id="VSP_003707" description="In isoform B and isoform B'." evidence="10">
    <location>
        <begin position="1"/>
        <end position="127"/>
    </location>
</feature>
<feature type="splice variant" id="VSP_003708" description="In isoform A' and isoform B'." evidence="10">
    <original>QHNYLCA</original>
    <variation>TISYHCS</variation>
    <location>
        <begin position="452"/>
        <end position="458"/>
    </location>
</feature>
<feature type="splice variant" id="VSP_003709" description="In isoform A' and isoform B'." evidence="10">
    <location>
        <begin position="459"/>
        <end position="786"/>
    </location>
</feature>
<feature type="mutagenesis site" description="Decreases transcriptional activity independently of hormone concentration. Does not alter hormone binding affinity." evidence="8">
    <original>S</original>
    <variation>A</variation>
    <location>
        <position position="210"/>
    </location>
</feature>
<feature type="mutagenesis site" description="Decreases transcriptional activity at low hormone concentration. Does not alter hormone binding affinity." evidence="7 8">
    <original>S</original>
    <variation>A</variation>
    <location>
        <position position="529"/>
    </location>
</feature>
<feature type="sequence conflict" description="In Ref. 2; AAA49013." evidence="11" ref="2">
    <original>E</original>
    <variation>DD</variation>
    <location>
        <position position="58"/>
    </location>
</feature>
<feature type="sequence conflict" description="In Ref. 5; AA sequence." evidence="11" ref="5">
    <original>Q</original>
    <variation>E</variation>
    <location>
        <position position="134"/>
    </location>
</feature>
<feature type="sequence conflict" description="In Ref. 5; AA sequence." evidence="11" ref="5">
    <original>Q</original>
    <variation>E</variation>
    <location>
        <position position="148"/>
    </location>
</feature>
<feature type="sequence conflict" description="In Ref. 2; AAA49013." evidence="11" ref="2">
    <original>K</original>
    <variation>N</variation>
    <location>
        <position position="480"/>
    </location>
</feature>
<feature type="sequence conflict" description="In Ref. 2; AAA49013." evidence="11" ref="2">
    <original>G</original>
    <variation>A</variation>
    <location>
        <position position="489"/>
    </location>
</feature>
<feature type="sequence conflict" description="In Ref. 2; AAA49013." evidence="11" ref="2">
    <original>R</original>
    <variation>T</variation>
    <location>
        <position position="577"/>
    </location>
</feature>
<feature type="sequence conflict" description="In Ref. 2; AAA49013." evidence="11" ref="2">
    <original>M</original>
    <variation>I</variation>
    <location>
        <position position="642"/>
    </location>
</feature>
<dbReference type="EMBL" id="Y00092">
    <property type="protein sequence ID" value="CAA68282.1"/>
    <property type="molecule type" value="mRNA"/>
</dbReference>
<dbReference type="EMBL" id="M13972">
    <property type="protein sequence ID" value="AAA49034.1"/>
    <property type="molecule type" value="mRNA"/>
</dbReference>
<dbReference type="EMBL" id="M37518">
    <property type="protein sequence ID" value="AAA49013.1"/>
    <property type="molecule type" value="mRNA"/>
</dbReference>
<dbReference type="EMBL" id="M37518">
    <property type="protein sequence ID" value="AAA49014.1"/>
    <property type="molecule type" value="mRNA"/>
</dbReference>
<dbReference type="EMBL" id="M14278">
    <property type="protein sequence ID" value="AAA49035.1"/>
    <property type="molecule type" value="mRNA"/>
</dbReference>
<dbReference type="EMBL" id="M14279">
    <property type="protein sequence ID" value="AAA49038.1"/>
    <property type="molecule type" value="mRNA"/>
</dbReference>
<dbReference type="EMBL" id="M14280">
    <property type="protein sequence ID" value="AAA49039.1"/>
    <property type="molecule type" value="mRNA"/>
</dbReference>
<dbReference type="EMBL" id="M32732">
    <property type="protein sequence ID" value="AAA49011.1"/>
    <property type="molecule type" value="mRNA"/>
</dbReference>
<dbReference type="EMBL" id="M31104">
    <property type="protein sequence ID" value="AAA49011.1"/>
    <property type="status" value="JOINED"/>
    <property type="molecule type" value="mRNA"/>
</dbReference>
<dbReference type="EMBL" id="M32726">
    <property type="protein sequence ID" value="AAA49011.1"/>
    <property type="status" value="JOINED"/>
    <property type="molecule type" value="mRNA"/>
</dbReference>
<dbReference type="EMBL" id="M32727">
    <property type="protein sequence ID" value="AAA49011.1"/>
    <property type="status" value="JOINED"/>
    <property type="molecule type" value="mRNA"/>
</dbReference>
<dbReference type="EMBL" id="M32728">
    <property type="protein sequence ID" value="AAA49011.1"/>
    <property type="status" value="JOINED"/>
    <property type="molecule type" value="mRNA"/>
</dbReference>
<dbReference type="EMBL" id="M32729">
    <property type="protein sequence ID" value="AAA49011.1"/>
    <property type="status" value="JOINED"/>
    <property type="molecule type" value="mRNA"/>
</dbReference>
<dbReference type="EMBL" id="M32730">
    <property type="protein sequence ID" value="AAA49011.1"/>
    <property type="status" value="JOINED"/>
    <property type="molecule type" value="mRNA"/>
</dbReference>
<dbReference type="EMBL" id="M32732">
    <property type="protein sequence ID" value="AAA49012.1"/>
    <property type="molecule type" value="mRNA"/>
</dbReference>
<dbReference type="EMBL" id="M31104">
    <property type="protein sequence ID" value="AAA49012.1"/>
    <property type="status" value="JOINED"/>
    <property type="molecule type" value="mRNA"/>
</dbReference>
<dbReference type="EMBL" id="M32726">
    <property type="protein sequence ID" value="AAA49012.1"/>
    <property type="status" value="JOINED"/>
    <property type="molecule type" value="mRNA"/>
</dbReference>
<dbReference type="EMBL" id="M32727">
    <property type="protein sequence ID" value="AAA49012.1"/>
    <property type="status" value="JOINED"/>
    <property type="molecule type" value="mRNA"/>
</dbReference>
<dbReference type="EMBL" id="M32728">
    <property type="protein sequence ID" value="AAA49012.1"/>
    <property type="status" value="JOINED"/>
    <property type="molecule type" value="mRNA"/>
</dbReference>
<dbReference type="EMBL" id="M32729">
    <property type="protein sequence ID" value="AAA49012.1"/>
    <property type="status" value="JOINED"/>
    <property type="molecule type" value="mRNA"/>
</dbReference>
<dbReference type="EMBL" id="M32730">
    <property type="protein sequence ID" value="AAA49012.1"/>
    <property type="status" value="JOINED"/>
    <property type="molecule type" value="mRNA"/>
</dbReference>
<dbReference type="EMBL" id="M31104">
    <property type="protein sequence ID" value="AAA49009.1"/>
    <property type="molecule type" value="mRNA"/>
</dbReference>
<dbReference type="EMBL" id="M31104">
    <property type="protein sequence ID" value="AAA49010.1"/>
    <property type="molecule type" value="mRNA"/>
</dbReference>
<dbReference type="PIR" id="A35466">
    <property type="entry name" value="A35466"/>
</dbReference>
<dbReference type="RefSeq" id="NP_990593.1">
    <molecule id="P07812-1"/>
    <property type="nucleotide sequence ID" value="NM_205262.2"/>
</dbReference>
<dbReference type="SMR" id="P07812"/>
<dbReference type="BioGRID" id="676458">
    <property type="interactions" value="8"/>
</dbReference>
<dbReference type="DIP" id="DIP-79N"/>
<dbReference type="FunCoup" id="P07812">
    <property type="interactions" value="2"/>
</dbReference>
<dbReference type="STRING" id="9031.ENSGALP00000027736"/>
<dbReference type="ChEMBL" id="CHEMBL3304"/>
<dbReference type="iPTMnet" id="P07812"/>
<dbReference type="PaxDb" id="9031-ENSGALP00000027736"/>
<dbReference type="Ensembl" id="ENSGALT00010019535.1">
    <molecule id="P07812-1"/>
    <property type="protein sequence ID" value="ENSGALP00010011083.1"/>
    <property type="gene ID" value="ENSGALG00010008178.1"/>
</dbReference>
<dbReference type="GeneID" id="396198"/>
<dbReference type="KEGG" id="gga:396198"/>
<dbReference type="CTD" id="5241"/>
<dbReference type="VEuPathDB" id="HostDB:geneid_396198"/>
<dbReference type="eggNOG" id="KOG3575">
    <property type="taxonomic scope" value="Eukaryota"/>
</dbReference>
<dbReference type="GeneTree" id="ENSGT00940000159713"/>
<dbReference type="HOGENOM" id="CLU_007368_15_0_1"/>
<dbReference type="InParanoid" id="P07812"/>
<dbReference type="OMA" id="PDLILNX"/>
<dbReference type="OrthoDB" id="8580220at2759"/>
<dbReference type="PhylomeDB" id="P07812"/>
<dbReference type="SABIO-RK" id="P07812"/>
<dbReference type="PRO" id="PR:P07812"/>
<dbReference type="Proteomes" id="UP000000539">
    <property type="component" value="Chromosome 1"/>
</dbReference>
<dbReference type="GO" id="GO:0000785">
    <property type="term" value="C:chromatin"/>
    <property type="evidence" value="ECO:0000314"/>
    <property type="project" value="AgBase"/>
</dbReference>
<dbReference type="GO" id="GO:0005829">
    <property type="term" value="C:cytosol"/>
    <property type="evidence" value="ECO:0000314"/>
    <property type="project" value="AgBase"/>
</dbReference>
<dbReference type="GO" id="GO:0016363">
    <property type="term" value="C:nuclear matrix"/>
    <property type="evidence" value="ECO:0000314"/>
    <property type="project" value="AgBase"/>
</dbReference>
<dbReference type="GO" id="GO:0005634">
    <property type="term" value="C:nucleus"/>
    <property type="evidence" value="ECO:0000314"/>
    <property type="project" value="AgBase"/>
</dbReference>
<dbReference type="GO" id="GO:0005886">
    <property type="term" value="C:plasma membrane"/>
    <property type="evidence" value="ECO:0007669"/>
    <property type="project" value="Ensembl"/>
</dbReference>
<dbReference type="GO" id="GO:0032993">
    <property type="term" value="C:protein-DNA complex"/>
    <property type="evidence" value="ECO:0000314"/>
    <property type="project" value="AgBase"/>
</dbReference>
<dbReference type="GO" id="GO:0043235">
    <property type="term" value="C:receptor complex"/>
    <property type="evidence" value="ECO:0000314"/>
    <property type="project" value="CAFA"/>
</dbReference>
<dbReference type="GO" id="GO:0051117">
    <property type="term" value="F:ATPase binding"/>
    <property type="evidence" value="ECO:0007669"/>
    <property type="project" value="Ensembl"/>
</dbReference>
<dbReference type="GO" id="GO:0031490">
    <property type="term" value="F:chromatin DNA binding"/>
    <property type="evidence" value="ECO:0000314"/>
    <property type="project" value="AgBase"/>
</dbReference>
<dbReference type="GO" id="GO:0001228">
    <property type="term" value="F:DNA-binding transcription activator activity, RNA polymerase II-specific"/>
    <property type="evidence" value="ECO:0007669"/>
    <property type="project" value="Ensembl"/>
</dbReference>
<dbReference type="GO" id="GO:0019899">
    <property type="term" value="F:enzyme binding"/>
    <property type="evidence" value="ECO:0000353"/>
    <property type="project" value="AgBase"/>
</dbReference>
<dbReference type="GO" id="GO:0034056">
    <property type="term" value="F:estrogen response element binding"/>
    <property type="evidence" value="ECO:0000318"/>
    <property type="project" value="GO_Central"/>
</dbReference>
<dbReference type="GO" id="GO:0030544">
    <property type="term" value="F:Hsp70 protein binding"/>
    <property type="evidence" value="ECO:0000353"/>
    <property type="project" value="AgBase"/>
</dbReference>
<dbReference type="GO" id="GO:0051879">
    <property type="term" value="F:Hsp90 protein binding"/>
    <property type="evidence" value="ECO:0000353"/>
    <property type="project" value="AgBase"/>
</dbReference>
<dbReference type="GO" id="GO:0042802">
    <property type="term" value="F:identical protein binding"/>
    <property type="evidence" value="ECO:0007669"/>
    <property type="project" value="Ensembl"/>
</dbReference>
<dbReference type="GO" id="GO:0004879">
    <property type="term" value="F:nuclear receptor activity"/>
    <property type="evidence" value="ECO:0000318"/>
    <property type="project" value="GO_Central"/>
</dbReference>
<dbReference type="GO" id="GO:0003707">
    <property type="term" value="F:nuclear steroid receptor activity"/>
    <property type="evidence" value="ECO:0007669"/>
    <property type="project" value="Ensembl"/>
</dbReference>
<dbReference type="GO" id="GO:1990239">
    <property type="term" value="F:steroid hormone binding"/>
    <property type="evidence" value="ECO:0000314"/>
    <property type="project" value="CAFA"/>
</dbReference>
<dbReference type="GO" id="GO:0001223">
    <property type="term" value="F:transcription coactivator binding"/>
    <property type="evidence" value="ECO:0007669"/>
    <property type="project" value="Ensembl"/>
</dbReference>
<dbReference type="GO" id="GO:0008270">
    <property type="term" value="F:zinc ion binding"/>
    <property type="evidence" value="ECO:0007669"/>
    <property type="project" value="UniProtKB-KW"/>
</dbReference>
<dbReference type="GO" id="GO:0002071">
    <property type="term" value="P:glandular epithelial cell maturation"/>
    <property type="evidence" value="ECO:0007669"/>
    <property type="project" value="Ensembl"/>
</dbReference>
<dbReference type="GO" id="GO:0051457">
    <property type="term" value="P:maintenance of protein location in nucleus"/>
    <property type="evidence" value="ECO:0007669"/>
    <property type="project" value="Ensembl"/>
</dbReference>
<dbReference type="GO" id="GO:0010629">
    <property type="term" value="P:negative regulation of gene expression"/>
    <property type="evidence" value="ECO:0007669"/>
    <property type="project" value="Ensembl"/>
</dbReference>
<dbReference type="GO" id="GO:0030518">
    <property type="term" value="P:nuclear receptor-mediated steroid hormone signaling pathway"/>
    <property type="evidence" value="ECO:0000318"/>
    <property type="project" value="GO_Central"/>
</dbReference>
<dbReference type="GO" id="GO:0001542">
    <property type="term" value="P:ovulation from ovarian follicle"/>
    <property type="evidence" value="ECO:0007669"/>
    <property type="project" value="Ensembl"/>
</dbReference>
<dbReference type="GO" id="GO:0038001">
    <property type="term" value="P:paracrine signaling"/>
    <property type="evidence" value="ECO:0007669"/>
    <property type="project" value="Ensembl"/>
</dbReference>
<dbReference type="GO" id="GO:0050847">
    <property type="term" value="P:progesterone receptor signaling pathway"/>
    <property type="evidence" value="ECO:0007669"/>
    <property type="project" value="Ensembl"/>
</dbReference>
<dbReference type="GO" id="GO:0050678">
    <property type="term" value="P:regulation of epithelial cell proliferation"/>
    <property type="evidence" value="ECO:0007669"/>
    <property type="project" value="Ensembl"/>
</dbReference>
<dbReference type="GO" id="GO:0006357">
    <property type="term" value="P:regulation of transcription by RNA polymerase II"/>
    <property type="evidence" value="ECO:0000318"/>
    <property type="project" value="GO_Central"/>
</dbReference>
<dbReference type="GO" id="GO:0043627">
    <property type="term" value="P:response to estrogen"/>
    <property type="evidence" value="ECO:0000314"/>
    <property type="project" value="AgBase"/>
</dbReference>
<dbReference type="GO" id="GO:0032570">
    <property type="term" value="P:response to progesterone"/>
    <property type="evidence" value="ECO:0000314"/>
    <property type="project" value="AgBase"/>
</dbReference>
<dbReference type="CDD" id="cd07172">
    <property type="entry name" value="NR_DBD_GR_PR"/>
    <property type="match status" value="1"/>
</dbReference>
<dbReference type="CDD" id="cd07074">
    <property type="entry name" value="NR_LBD_PR"/>
    <property type="match status" value="1"/>
</dbReference>
<dbReference type="FunFam" id="1.10.565.10:FF:000004">
    <property type="entry name" value="Androgen receptor variant"/>
    <property type="match status" value="1"/>
</dbReference>
<dbReference type="FunFam" id="3.30.50.10:FF:000027">
    <property type="entry name" value="Progesterone receptor"/>
    <property type="match status" value="1"/>
</dbReference>
<dbReference type="Gene3D" id="3.30.50.10">
    <property type="entry name" value="Erythroid Transcription Factor GATA-1, subunit A"/>
    <property type="match status" value="1"/>
</dbReference>
<dbReference type="Gene3D" id="1.10.565.10">
    <property type="entry name" value="Retinoid X Receptor"/>
    <property type="match status" value="1"/>
</dbReference>
<dbReference type="InterPro" id="IPR035500">
    <property type="entry name" value="NHR-like_dom_sf"/>
</dbReference>
<dbReference type="InterPro" id="IPR000536">
    <property type="entry name" value="Nucl_hrmn_rcpt_lig-bd"/>
</dbReference>
<dbReference type="InterPro" id="IPR050200">
    <property type="entry name" value="Nuclear_hormone_rcpt_NR3"/>
</dbReference>
<dbReference type="InterPro" id="IPR001723">
    <property type="entry name" value="Nuclear_hrmn_rcpt"/>
</dbReference>
<dbReference type="InterPro" id="IPR000128">
    <property type="entry name" value="Progest_rcpt"/>
</dbReference>
<dbReference type="InterPro" id="IPR001628">
    <property type="entry name" value="Znf_hrmn_rcpt"/>
</dbReference>
<dbReference type="InterPro" id="IPR013088">
    <property type="entry name" value="Znf_NHR/GATA"/>
</dbReference>
<dbReference type="PANTHER" id="PTHR48092">
    <property type="entry name" value="KNIRPS-RELATED PROTEIN-RELATED"/>
    <property type="match status" value="1"/>
</dbReference>
<dbReference type="Pfam" id="PF00104">
    <property type="entry name" value="Hormone_recep"/>
    <property type="match status" value="1"/>
</dbReference>
<dbReference type="Pfam" id="PF02161">
    <property type="entry name" value="Prog_receptor"/>
    <property type="match status" value="2"/>
</dbReference>
<dbReference type="Pfam" id="PF00105">
    <property type="entry name" value="zf-C4"/>
    <property type="match status" value="1"/>
</dbReference>
<dbReference type="PRINTS" id="PR00544">
    <property type="entry name" value="PROGESTRONER"/>
</dbReference>
<dbReference type="PRINTS" id="PR00398">
    <property type="entry name" value="STRDHORMONER"/>
</dbReference>
<dbReference type="PRINTS" id="PR00047">
    <property type="entry name" value="STROIDFINGER"/>
</dbReference>
<dbReference type="SMART" id="SM00430">
    <property type="entry name" value="HOLI"/>
    <property type="match status" value="1"/>
</dbReference>
<dbReference type="SMART" id="SM00399">
    <property type="entry name" value="ZnF_C4"/>
    <property type="match status" value="1"/>
</dbReference>
<dbReference type="SUPFAM" id="SSF57716">
    <property type="entry name" value="Glucocorticoid receptor-like (DNA-binding domain)"/>
    <property type="match status" value="1"/>
</dbReference>
<dbReference type="SUPFAM" id="SSF48508">
    <property type="entry name" value="Nuclear receptor ligand-binding domain"/>
    <property type="match status" value="1"/>
</dbReference>
<dbReference type="PROSITE" id="PS51843">
    <property type="entry name" value="NR_LBD"/>
    <property type="match status" value="1"/>
</dbReference>
<dbReference type="PROSITE" id="PS00031">
    <property type="entry name" value="NUCLEAR_REC_DBD_1"/>
    <property type="match status" value="1"/>
</dbReference>
<dbReference type="PROSITE" id="PS51030">
    <property type="entry name" value="NUCLEAR_REC_DBD_2"/>
    <property type="match status" value="1"/>
</dbReference>
<proteinExistence type="evidence at protein level"/>
<keyword id="KW-0025">Alternative splicing</keyword>
<keyword id="KW-0963">Cytoplasm</keyword>
<keyword id="KW-0903">Direct protein sequencing</keyword>
<keyword id="KW-0238">DNA-binding</keyword>
<keyword id="KW-1017">Isopeptide bond</keyword>
<keyword id="KW-0446">Lipid-binding</keyword>
<keyword id="KW-0479">Metal-binding</keyword>
<keyword id="KW-0539">Nucleus</keyword>
<keyword id="KW-0597">Phosphoprotein</keyword>
<keyword id="KW-0675">Receptor</keyword>
<keyword id="KW-1185">Reference proteome</keyword>
<keyword id="KW-0754">Steroid-binding</keyword>
<keyword id="KW-0804">Transcription</keyword>
<keyword id="KW-0805">Transcription regulation</keyword>
<keyword id="KW-0832">Ubl conjugation</keyword>
<keyword id="KW-0862">Zinc</keyword>
<keyword id="KW-0863">Zinc-finger</keyword>
<sequence>MTEVKSKETRAPSSARDGAVLLQAPPSRGEAEGIDVALDGLLYPRSSDEEEEEEENEEEEEEEEPQQREEEEEEEEEDRDCPSYRPGGGSLSKDCLDSVLDTFLAPAAHAAPWSLFGPEVPEVPVAPMSRGPEQKAVDAGPGAPGPSQPRPGAPLWPGADSLNVAVKARPGPEDASENRAPGLPGAEERGFPERDAGPGEGGLAPAAAASPAAVEPGAGQDYLHVPILPLNSAFLASRTRQLLDVEAAYDGSAFGPRSSPSVPAADLAEYGYPPPDGKEGPFAYGEFQSALKIKEEGVGLPAAPPPFLGAKAAPADFAQPPRAGQEPSLECVLYKAEPPLLPGAYGPPAAPDSLPSTSAAPPGLYSPLGLNGHHQALGFPAAVLKEGLPQLCPPYLGYVRPDTETSQSSQYSFESLPQKICLICGDEASGCHYGVLTCGSCKVFFKRAMEGQHNYLCAGRNDCIVDKIRRKNCPACRLRKCCQAGMVLGGRKFKKLNKMKVVRTLDVALQQPAVLQDETQSLTQRLSFSPNQEIPFVPPMISVLRGIEPEVVYAGYDNTKPETPSSLLTSLNHLCERQLLCVVKWSKLLPGFRNLHIDDQITLIQYSWMSLMVFAMGWRSYKHVSGQMLYFAPDLILNEQRMKESSFYSLCLSMWQLPQEFVRLQVSQEEFLCMKALLLLNTIPLEGLRSQSQFDEMRTSYIRELVKAIGLRQKGVVANSQRFYQLTKLMDSMHDLVKQLHLFCLNTFLQSRALSVEFPEMMSEVIAAQLPKILAGMVKPLLFHKK</sequence>
<protein>
    <recommendedName>
        <fullName>Progesterone receptor</fullName>
        <shortName>PR</shortName>
    </recommendedName>
    <alternativeName>
        <fullName>Nuclear receptor subfamily 3 group C member 3</fullName>
    </alternativeName>
</protein>
<evidence type="ECO:0000250" key="1"/>
<evidence type="ECO:0000255" key="2">
    <source>
        <dbReference type="PROSITE-ProRule" id="PRU00407"/>
    </source>
</evidence>
<evidence type="ECO:0000255" key="3">
    <source>
        <dbReference type="PROSITE-ProRule" id="PRU01189"/>
    </source>
</evidence>
<evidence type="ECO:0000256" key="4">
    <source>
        <dbReference type="SAM" id="MobiDB-lite"/>
    </source>
</evidence>
<evidence type="ECO:0000269" key="5">
    <source>
    </source>
</evidence>
<evidence type="ECO:0000269" key="6">
    <source>
    </source>
</evidence>
<evidence type="ECO:0000269" key="7">
    <source>
    </source>
</evidence>
<evidence type="ECO:0000269" key="8">
    <source>
    </source>
</evidence>
<evidence type="ECO:0000269" key="9">
    <source>
    </source>
</evidence>
<evidence type="ECO:0000303" key="10">
    <source>
    </source>
</evidence>
<evidence type="ECO:0000305" key="11"/>
<comment type="function">
    <text>The steroid hormones and their receptors are involved in the regulation of eukaryotic gene expression and affect cellular proliferation and differentiation in target tissues.</text>
</comment>
<comment type="subcellular location">
    <subcellularLocation>
        <location evidence="2 9">Nucleus</location>
    </subcellularLocation>
    <subcellularLocation>
        <location evidence="9">Cytoplasm</location>
    </subcellularLocation>
    <text evidence="1">Nucleoplasmic shuttling is both hormone- and cell cycle-dependent. On hormone stimulation, retained in the cytoplasm in the G(1) and G(2)/M phases (By similarity).</text>
</comment>
<comment type="subcellular location">
    <molecule>Isoform A</molecule>
    <subcellularLocation>
        <location>Nucleus</location>
    </subcellularLocation>
    <subcellularLocation>
        <location>Cytoplasm</location>
    </subcellularLocation>
    <text>Mainly nuclear.</text>
</comment>
<comment type="alternative products">
    <event type="alternative splicing"/>
    <isoform>
        <id>P07812-1</id>
        <name>A</name>
        <sequence type="displayed"/>
    </isoform>
    <isoform>
        <id>P07812-2</id>
        <name>A'</name>
        <sequence type="described" ref="VSP_003708 VSP_003709"/>
    </isoform>
    <isoform>
        <id>P07812-3</id>
        <name>B</name>
        <sequence type="described" ref="VSP_003707"/>
    </isoform>
    <isoform>
        <id>P07812-4</id>
        <name>B'</name>
        <sequence type="described" ref="VSP_003707 VSP_003708 VSP_003709"/>
    </isoform>
</comment>
<comment type="tissue specificity">
    <text evidence="6">Oviduct and bursa of Fabricius.</text>
</comment>
<comment type="domain">
    <text>Composed of three domains: a modulating N-terminal domain, a DNA-binding domain and a C-terminal ligand-binding domain.</text>
</comment>
<comment type="PTM">
    <text evidence="5 7 8">Phosphorylation of Ser-529 is sharply increased upon progesterone treatment, whereas phosphorylation of Ser-210 and Ser-259 is modestly induced by progesterone.</text>
</comment>
<comment type="PTM">
    <text evidence="1">Ubiquitinated. Ubiquitination is increased by progesterone and represses sumoylation at the same site (By similarity).</text>
</comment>
<comment type="PTM">
    <text evidence="1">Sumoylation is hormone-dependent and represses transcriptional activity. Sumoylation on all three sites is enhanced by PIAS3. Desumoylated by SENP1. Sumoylation on Lys-385, the main site of sumoylation, is repressed by ubiquitination on the same site (By similarity).</text>
</comment>
<comment type="similarity">
    <text evidence="11">Belongs to the nuclear hormone receptor family. NR3 subfamily.</text>
</comment>
<accession>P07812</accession>
<accession>Q90946</accession>
<reference key="1">
    <citation type="journal article" date="1987" name="EMBO J.">
        <title>The chicken progesterone receptor: sequence, expression and functional analysis.</title>
        <authorList>
            <person name="Gronemeyer H."/>
            <person name="Turcotte B."/>
            <person name="Quirin-Stricker C."/>
            <person name="Bocquel M.T."/>
            <person name="Meyer M.E."/>
            <person name="Krozowski Z."/>
            <person name="Jeltsch J.-M."/>
            <person name="Lerouge T."/>
            <person name="Garnier J.-M."/>
            <person name="Chambon P."/>
        </authorList>
    </citation>
    <scope>NUCLEOTIDE SEQUENCE [MRNA]</scope>
</reference>
<reference key="2">
    <citation type="journal article" date="1987" name="Mol. Endocrinol.">
        <title>Sequence and expression of a functional chicken progesterone receptor.</title>
        <authorList>
            <person name="Conneely O.M."/>
            <person name="Dobson A.D.W."/>
            <person name="Tsai M.-J."/>
            <person name="Beattie W.G."/>
            <person name="Toft D.O."/>
            <person name="Huckaby C.S."/>
            <person name="Zarucki T."/>
            <person name="Schrader W.T."/>
            <person name="O'Malley B.W."/>
        </authorList>
    </citation>
    <scope>NUCLEOTIDE SEQUENCE [MRNA]</scope>
</reference>
<reference key="3">
    <citation type="journal article" date="1990" name="J. Biol. Chem.">
        <title>Characterization of multiple mRNAs originating from the chicken progesterone receptor gene. Evidence for a specific transcript encoding form A.</title>
        <authorList>
            <person name="Jeltsch J.-M."/>
            <person name="Turcotte B."/>
            <person name="Garnier J.-M."/>
            <person name="Lerouge T."/>
            <person name="Krozowski Z."/>
            <person name="Gronemeyer H."/>
            <person name="Chambon P."/>
        </authorList>
    </citation>
    <scope>NUCLEOTIDE SEQUENCE [MRNA] (ISOFORMS A; A'; B AND B')</scope>
</reference>
<reference key="4">
    <citation type="journal article" date="1986" name="Science">
        <title>Molecular cloning of the chicken progesterone receptor.</title>
        <authorList>
            <person name="Conneely O.M."/>
            <person name="Sullivan W.P."/>
            <person name="Toft D.O."/>
            <person name="Birnbaumer M."/>
            <person name="Cook R.G."/>
            <person name="Maxwell B.L."/>
            <person name="Zarucki-Schulz T."/>
            <person name="Greene G.L."/>
            <person name="Schrader W.T."/>
            <person name="O'Malley B.W."/>
        </authorList>
    </citation>
    <scope>NUCLEOTIDE SEQUENCE [MRNA] OF 128-164</scope>
</reference>
<reference key="5">
    <citation type="journal article" date="1987" name="Mol. Endocrinol.">
        <title>Chemical and antigenic properties of pure 108,000 molecular weight chick progesterone receptor.</title>
        <authorList>
            <person name="Birnbaumer M."/>
            <person name="Hinrichs-Rosello M.V."/>
            <person name="Cook R.G."/>
            <person name="Schrader W.T."/>
            <person name="O'Malley B.W."/>
        </authorList>
    </citation>
    <scope>PROTEIN SEQUENCE OF 128-164 AND 546-558</scope>
    <scope>TISSUE SPECIFICITY</scope>
</reference>
<reference key="6">
    <citation type="journal article" date="1987" name="Mol. Cell. Endocrinol.">
        <title>Peptide sequencing of the chick oviduct progesterone receptor form B.</title>
        <authorList>
            <person name="Simpson R.J."/>
            <person name="Grego B."/>
            <person name="Govindan M.V."/>
            <person name="Gronemeyer H."/>
        </authorList>
    </citation>
    <scope>PROTEIN SEQUENCE OF 136-153; 168-174; 195-228; 526-539 AND 546-563</scope>
</reference>
<reference key="7">
    <citation type="journal article" date="1990" name="J. Biol. Chem.">
        <title>Hormonal regulation and identification of chicken progesterone receptor phosphorylation sites.</title>
        <authorList>
            <person name="Denner L.A."/>
            <person name="Schrader W.T."/>
            <person name="O'Malley B.W."/>
            <person name="Weigel N.L."/>
        </authorList>
    </citation>
    <scope>PROTEIN SEQUENCE OF 195-220; 258-265 AND 526-533</scope>
    <scope>PHOSPHORYLATION AT SER-210; SER-259 AND SER-529</scope>
</reference>
<reference key="8">
    <citation type="journal article" date="1986" name="Proc. Natl. Acad. Sci. U.S.A.">
        <title>Cloning of the chicken progesterone receptor.</title>
        <authorList>
            <person name="Jeltsch J.-M."/>
            <person name="Krozowski Z."/>
            <person name="Quirin-Stricker C."/>
            <person name="Gronemeyer H."/>
            <person name="Simpson R.J."/>
            <person name="Garnier J.-M."/>
            <person name="Krust A."/>
            <person name="Jacob F."/>
            <person name="Chambon P."/>
        </authorList>
    </citation>
    <scope>NUCLEOTIDE SEQUENCE [MRNA] OF 417-490</scope>
</reference>
<reference key="9">
    <citation type="journal article" date="1989" name="J. Biol. Chem.">
        <title>The chicken progesterone receptor A and B isoforms are products of an alternate translation initiation event.</title>
        <authorList>
            <person name="Conneely O.M."/>
            <person name="Kettelberger D.M."/>
            <person name="Tsai M.-J."/>
            <person name="Schrader W.T."/>
            <person name="O'Malley B.W."/>
        </authorList>
    </citation>
    <scope>DIFFERENCE BETWEEN FORM 1 AND FORM 2</scope>
</reference>
<reference key="10">
    <citation type="journal article" date="1994" name="Mol. Endocrinol.">
        <title>Phosphorylation of Ser530 facilitates hormone-dependent transcriptional activation of the chicken progesterone receptor.</title>
        <authorList>
            <person name="Bai W."/>
            <person name="Tullos S."/>
            <person name="Weigel N.L."/>
        </authorList>
    </citation>
    <scope>PHOSPHORYLATION AT SER-529</scope>
    <scope>MUTAGENESIS OF SER-529</scope>
</reference>
<reference key="11">
    <citation type="journal article" date="1996" name="J. Biol. Chem.">
        <title>Phosphorylation of Ser211 in the chicken progesterone receptor modulates its transcriptional activity.</title>
        <authorList>
            <person name="Bai W."/>
            <person name="Weigel N.L."/>
        </authorList>
    </citation>
    <scope>PHOSPHORYLATION AT SER-210</scope>
    <scope>MUTAGENESIS OF SER-210 AND SER-529</scope>
</reference>
<reference key="12">
    <citation type="journal article" date="1998" name="Life Sci.">
        <title>Evidence for enhanced ubiquitin-mediated proteolysis of the chicken progesterone receptor by progesterone.</title>
        <authorList>
            <person name="Syvaala H."/>
            <person name="Vienonen A."/>
            <person name="Zhuang Y.-H."/>
            <person name="Kivineva M."/>
            <person name="Ylikomi T."/>
            <person name="Tuohimaa P."/>
        </authorList>
    </citation>
    <scope>UBIQUITINATION</scope>
    <scope>SUBCELLULAR LOCATION</scope>
</reference>
<name>PRGR_CHICK</name>